<proteinExistence type="inferred from homology"/>
<feature type="chain" id="PRO_1000079374" description="Light-independent protochlorophyllide reductase subunit N">
    <location>
        <begin position="1"/>
        <end position="414"/>
    </location>
</feature>
<feature type="binding site" evidence="1">
    <location>
        <position position="16"/>
    </location>
    <ligand>
        <name>[4Fe-4S] cluster</name>
        <dbReference type="ChEBI" id="CHEBI:49883"/>
        <note>ligand shared with heterodimeric partner</note>
    </ligand>
</feature>
<feature type="binding site" evidence="1">
    <location>
        <position position="41"/>
    </location>
    <ligand>
        <name>[4Fe-4S] cluster</name>
        <dbReference type="ChEBI" id="CHEBI:49883"/>
        <note>ligand shared with heterodimeric partner</note>
    </ligand>
</feature>
<feature type="binding site" evidence="1">
    <location>
        <position position="98"/>
    </location>
    <ligand>
        <name>[4Fe-4S] cluster</name>
        <dbReference type="ChEBI" id="CHEBI:49883"/>
        <note>ligand shared with heterodimeric partner</note>
    </ligand>
</feature>
<organism>
    <name type="scientific">Roseiflexus castenholzii (strain DSM 13941 / HLO8)</name>
    <dbReference type="NCBI Taxonomy" id="383372"/>
    <lineage>
        <taxon>Bacteria</taxon>
        <taxon>Bacillati</taxon>
        <taxon>Chloroflexota</taxon>
        <taxon>Chloroflexia</taxon>
        <taxon>Chloroflexales</taxon>
        <taxon>Roseiflexineae</taxon>
        <taxon>Roseiflexaceae</taxon>
        <taxon>Roseiflexus</taxon>
    </lineage>
</organism>
<protein>
    <recommendedName>
        <fullName evidence="1">Light-independent protochlorophyllide reductase subunit N</fullName>
        <shortName evidence="1">DPOR subunit N</shortName>
        <shortName evidence="1">LI-POR subunit N</shortName>
        <ecNumber evidence="1">1.3.7.7</ecNumber>
    </recommendedName>
</protein>
<reference key="1">
    <citation type="submission" date="2007-08" db="EMBL/GenBank/DDBJ databases">
        <title>Complete sequence of Roseiflexus castenholzii DSM 13941.</title>
        <authorList>
            <consortium name="US DOE Joint Genome Institute"/>
            <person name="Copeland A."/>
            <person name="Lucas S."/>
            <person name="Lapidus A."/>
            <person name="Barry K."/>
            <person name="Glavina del Rio T."/>
            <person name="Dalin E."/>
            <person name="Tice H."/>
            <person name="Pitluck S."/>
            <person name="Thompson L.S."/>
            <person name="Brettin T."/>
            <person name="Bruce D."/>
            <person name="Detter J.C."/>
            <person name="Han C."/>
            <person name="Tapia R."/>
            <person name="Schmutz J."/>
            <person name="Larimer F."/>
            <person name="Land M."/>
            <person name="Hauser L."/>
            <person name="Kyrpides N."/>
            <person name="Mikhailova N."/>
            <person name="Bryant D.A."/>
            <person name="Hanada S."/>
            <person name="Tsukatani Y."/>
            <person name="Richardson P."/>
        </authorList>
    </citation>
    <scope>NUCLEOTIDE SEQUENCE [LARGE SCALE GENOMIC DNA]</scope>
    <source>
        <strain>DSM 13941 / HLO8</strain>
    </source>
</reference>
<name>BCHN_ROSCS</name>
<evidence type="ECO:0000255" key="1">
    <source>
        <dbReference type="HAMAP-Rule" id="MF_00352"/>
    </source>
</evidence>
<keyword id="KW-0004">4Fe-4S</keyword>
<keyword id="KW-0067">ATP-binding</keyword>
<keyword id="KW-0077">Bacteriochlorophyll biosynthesis</keyword>
<keyword id="KW-0149">Chlorophyll biosynthesis</keyword>
<keyword id="KW-0408">Iron</keyword>
<keyword id="KW-0411">Iron-sulfur</keyword>
<keyword id="KW-0479">Metal-binding</keyword>
<keyword id="KW-0547">Nucleotide-binding</keyword>
<keyword id="KW-0560">Oxidoreductase</keyword>
<keyword id="KW-0602">Photosynthesis</keyword>
<keyword id="KW-1185">Reference proteome</keyword>
<dbReference type="EC" id="1.3.7.7" evidence="1"/>
<dbReference type="EMBL" id="CP000804">
    <property type="protein sequence ID" value="ABU57629.1"/>
    <property type="molecule type" value="Genomic_DNA"/>
</dbReference>
<dbReference type="RefSeq" id="WP_012120057.1">
    <property type="nucleotide sequence ID" value="NC_009767.1"/>
</dbReference>
<dbReference type="SMR" id="A7NJF9"/>
<dbReference type="STRING" id="383372.Rcas_1536"/>
<dbReference type="KEGG" id="rca:Rcas_1536"/>
<dbReference type="eggNOG" id="COG2710">
    <property type="taxonomic scope" value="Bacteria"/>
</dbReference>
<dbReference type="HOGENOM" id="CLU_037170_0_0_0"/>
<dbReference type="OrthoDB" id="495776at2"/>
<dbReference type="UniPathway" id="UPA00671"/>
<dbReference type="Proteomes" id="UP000000263">
    <property type="component" value="Chromosome"/>
</dbReference>
<dbReference type="GO" id="GO:0051539">
    <property type="term" value="F:4 iron, 4 sulfur cluster binding"/>
    <property type="evidence" value="ECO:0007669"/>
    <property type="project" value="UniProtKB-UniRule"/>
</dbReference>
<dbReference type="GO" id="GO:0005524">
    <property type="term" value="F:ATP binding"/>
    <property type="evidence" value="ECO:0007669"/>
    <property type="project" value="UniProtKB-UniRule"/>
</dbReference>
<dbReference type="GO" id="GO:0046872">
    <property type="term" value="F:metal ion binding"/>
    <property type="evidence" value="ECO:0007669"/>
    <property type="project" value="UniProtKB-KW"/>
</dbReference>
<dbReference type="GO" id="GO:0016730">
    <property type="term" value="F:oxidoreductase activity, acting on iron-sulfur proteins as donors"/>
    <property type="evidence" value="ECO:0007669"/>
    <property type="project" value="InterPro"/>
</dbReference>
<dbReference type="GO" id="GO:0016636">
    <property type="term" value="F:oxidoreductase activity, acting on the CH-CH group of donors, iron-sulfur protein as acceptor"/>
    <property type="evidence" value="ECO:0007669"/>
    <property type="project" value="UniProtKB-UniRule"/>
</dbReference>
<dbReference type="GO" id="GO:0036070">
    <property type="term" value="P:light-independent bacteriochlorophyll biosynthetic process"/>
    <property type="evidence" value="ECO:0007669"/>
    <property type="project" value="UniProtKB-UniRule"/>
</dbReference>
<dbReference type="GO" id="GO:0019685">
    <property type="term" value="P:photosynthesis, dark reaction"/>
    <property type="evidence" value="ECO:0007669"/>
    <property type="project" value="InterPro"/>
</dbReference>
<dbReference type="Gene3D" id="3.40.50.1980">
    <property type="entry name" value="Nitrogenase molybdenum iron protein domain"/>
    <property type="match status" value="3"/>
</dbReference>
<dbReference type="HAMAP" id="MF_00352">
    <property type="entry name" value="ChlN_BchN"/>
    <property type="match status" value="1"/>
</dbReference>
<dbReference type="InterPro" id="IPR050293">
    <property type="entry name" value="LIPOR_BchN/ChlN"/>
</dbReference>
<dbReference type="InterPro" id="IPR000510">
    <property type="entry name" value="Nase/OxRdtase_comp1"/>
</dbReference>
<dbReference type="InterPro" id="IPR005970">
    <property type="entry name" value="Protochl_reductN"/>
</dbReference>
<dbReference type="NCBIfam" id="TIGR01279">
    <property type="entry name" value="DPOR_bchN"/>
    <property type="match status" value="1"/>
</dbReference>
<dbReference type="NCBIfam" id="NF002768">
    <property type="entry name" value="PRK02842.1"/>
    <property type="match status" value="1"/>
</dbReference>
<dbReference type="PANTHER" id="PTHR39429">
    <property type="entry name" value="LIGHT-INDEPENDENT PROTOCHLOROPHYLLIDE REDUCTASE SUBUNIT N"/>
    <property type="match status" value="1"/>
</dbReference>
<dbReference type="PANTHER" id="PTHR39429:SF3">
    <property type="entry name" value="LIGHT-INDEPENDENT PROTOCHLOROPHYLLIDE REDUCTASE SUBUNIT N"/>
    <property type="match status" value="1"/>
</dbReference>
<dbReference type="Pfam" id="PF00148">
    <property type="entry name" value="Oxidored_nitro"/>
    <property type="match status" value="1"/>
</dbReference>
<dbReference type="PIRSF" id="PIRSF000162">
    <property type="entry name" value="P_chlorophyll_rd"/>
    <property type="match status" value="1"/>
</dbReference>
<dbReference type="SUPFAM" id="SSF53807">
    <property type="entry name" value="Helical backbone' metal receptor"/>
    <property type="match status" value="1"/>
</dbReference>
<comment type="function">
    <text evidence="1">Component of the dark-operative protochlorophyllide reductase (DPOR) that uses Mg-ATP and reduced ferredoxin to reduce ring D of protochlorophyllide (Pchlide) to form chlorophyllide a (Chlide). This reaction is light-independent. The NB-protein (BchN-BchB) is the catalytic component of the complex.</text>
</comment>
<comment type="catalytic activity">
    <reaction evidence="1">
        <text>chlorophyllide a + oxidized 2[4Fe-4S]-[ferredoxin] + 2 ADP + 2 phosphate = protochlorophyllide a + reduced 2[4Fe-4S]-[ferredoxin] + 2 ATP + 2 H2O</text>
        <dbReference type="Rhea" id="RHEA:28202"/>
        <dbReference type="Rhea" id="RHEA-COMP:10002"/>
        <dbReference type="Rhea" id="RHEA-COMP:10004"/>
        <dbReference type="ChEBI" id="CHEBI:15377"/>
        <dbReference type="ChEBI" id="CHEBI:30616"/>
        <dbReference type="ChEBI" id="CHEBI:33722"/>
        <dbReference type="ChEBI" id="CHEBI:33723"/>
        <dbReference type="ChEBI" id="CHEBI:43474"/>
        <dbReference type="ChEBI" id="CHEBI:83348"/>
        <dbReference type="ChEBI" id="CHEBI:83350"/>
        <dbReference type="ChEBI" id="CHEBI:456216"/>
        <dbReference type="EC" id="1.3.7.7"/>
    </reaction>
</comment>
<comment type="cofactor">
    <cofactor evidence="1">
        <name>[4Fe-4S] cluster</name>
        <dbReference type="ChEBI" id="CHEBI:49883"/>
    </cofactor>
    <text evidence="1">Binds 1 [4Fe-4S] cluster per heterodimer. The cluster is bound at the heterodimer interface by residues from both subunits.</text>
</comment>
<comment type="pathway">
    <text evidence="1">Porphyrin-containing compound metabolism; bacteriochlorophyll biosynthesis (light-independent).</text>
</comment>
<comment type="subunit">
    <text evidence="1">Protochlorophyllide reductase is composed of three subunits; BchL, BchN and BchB. Forms a heterotetramer of two BchB and two BchN subunits.</text>
</comment>
<comment type="similarity">
    <text evidence="1">Belongs to the BchN/ChlN family.</text>
</comment>
<sequence length="414" mass="45549">MSATVIREDGAYHSFCGLTCVGWLYQKIKDSFFLVLGTHTCAHLLQNVLGVMVFARPRFGVALIEEADLSKQQPELNAIIDEIVADHHPSVIFLLSSCTPEVMKVEFDGLARAVSRPNLPVLFVPASGLDYTFSQAEDSVLQALLPFCPVAPADDRRVVFLGSVNDAIADDFHTEAARLGIPVAGFLPESHFRDLPPIGPGTVVAPLQPYLAKVAGRLARERGATVMTSLFPFGPDGTRAFWEDLAAAMGKAVDLSERERQAWERLEPHLEILRGKKVFFTADNLMELPLARFLRNAGCIILECSSPYINRKFHARELAALDGVRVVEQPNFDRQLRDIRALRPDLVISTLATTNPLVGHGVVAKWSTEFSFMPIQGWSGAATLAGMFTRPLKRHAQLDPLMDDPLWVAGLMPG</sequence>
<gene>
    <name evidence="1" type="primary">bchN</name>
    <name type="ordered locus">Rcas_1536</name>
</gene>
<accession>A7NJF9</accession>